<evidence type="ECO:0000255" key="1">
    <source>
        <dbReference type="HAMAP-Rule" id="MF_00002"/>
    </source>
</evidence>
<reference key="1">
    <citation type="journal article" date="2006" name="Genome Res.">
        <title>Massive genome erosion and functional adaptations provide insights into the symbiotic lifestyle of Sodalis glossinidius in the tsetse host.</title>
        <authorList>
            <person name="Toh H."/>
            <person name="Weiss B.L."/>
            <person name="Perkin S.A.H."/>
            <person name="Yamashita A."/>
            <person name="Oshima K."/>
            <person name="Hattori M."/>
            <person name="Aksoy S."/>
        </authorList>
    </citation>
    <scope>NUCLEOTIDE SEQUENCE [LARGE SCALE GENOMIC DNA]</scope>
    <source>
        <strain>morsitans</strain>
    </source>
</reference>
<organism>
    <name type="scientific">Sodalis glossinidius (strain morsitans)</name>
    <dbReference type="NCBI Taxonomy" id="343509"/>
    <lineage>
        <taxon>Bacteria</taxon>
        <taxon>Pseudomonadati</taxon>
        <taxon>Pseudomonadota</taxon>
        <taxon>Gammaproteobacteria</taxon>
        <taxon>Enterobacterales</taxon>
        <taxon>Bruguierivoracaceae</taxon>
        <taxon>Sodalis</taxon>
    </lineage>
</organism>
<gene>
    <name evidence="1" type="primary">pyrI</name>
    <name type="ordered locus">SG2116</name>
</gene>
<sequence length="154" mass="17308">MTQDNKLQVEAIRRGTVIDHIPAQVGMKLLSLFKLTATDERITIGLNLPSNQQGKKDLIKLENIFLTEEQANQLAIYAPHATVNRIDNYDVVRKQTLSLPERIDGVLTCPNSNCISRSEPVASGFRVQVHGQQVHLQCKYCEKEFEHQAVVQSA</sequence>
<proteinExistence type="inferred from homology"/>
<comment type="function">
    <text evidence="1">Involved in allosteric regulation of aspartate carbamoyltransferase.</text>
</comment>
<comment type="cofactor">
    <cofactor evidence="1">
        <name>Zn(2+)</name>
        <dbReference type="ChEBI" id="CHEBI:29105"/>
    </cofactor>
    <text evidence="1">Binds 1 zinc ion per subunit.</text>
</comment>
<comment type="subunit">
    <text evidence="1">Contains catalytic and regulatory chains.</text>
</comment>
<comment type="similarity">
    <text evidence="1">Belongs to the PyrI family.</text>
</comment>
<dbReference type="EMBL" id="AP008232">
    <property type="protein sequence ID" value="BAE75391.1"/>
    <property type="molecule type" value="Genomic_DNA"/>
</dbReference>
<dbReference type="RefSeq" id="WP_011411928.1">
    <property type="nucleotide sequence ID" value="NC_007712.1"/>
</dbReference>
<dbReference type="SMR" id="Q2NR34"/>
<dbReference type="STRING" id="343509.SG2116"/>
<dbReference type="KEGG" id="sgl:SG2116"/>
<dbReference type="eggNOG" id="COG1781">
    <property type="taxonomic scope" value="Bacteria"/>
</dbReference>
<dbReference type="HOGENOM" id="CLU_128576_0_0_6"/>
<dbReference type="OrthoDB" id="5599321at2"/>
<dbReference type="BioCyc" id="SGLO343509:SGP1_RS19485-MONOMER"/>
<dbReference type="Proteomes" id="UP000001932">
    <property type="component" value="Chromosome"/>
</dbReference>
<dbReference type="GO" id="GO:0009347">
    <property type="term" value="C:aspartate carbamoyltransferase complex"/>
    <property type="evidence" value="ECO:0007669"/>
    <property type="project" value="InterPro"/>
</dbReference>
<dbReference type="GO" id="GO:0046872">
    <property type="term" value="F:metal ion binding"/>
    <property type="evidence" value="ECO:0007669"/>
    <property type="project" value="UniProtKB-KW"/>
</dbReference>
<dbReference type="GO" id="GO:0006207">
    <property type="term" value="P:'de novo' pyrimidine nucleobase biosynthetic process"/>
    <property type="evidence" value="ECO:0007669"/>
    <property type="project" value="InterPro"/>
</dbReference>
<dbReference type="GO" id="GO:0006221">
    <property type="term" value="P:pyrimidine nucleotide biosynthetic process"/>
    <property type="evidence" value="ECO:0007669"/>
    <property type="project" value="UniProtKB-UniRule"/>
</dbReference>
<dbReference type="FunFam" id="3.30.70.140:FF:000001">
    <property type="entry name" value="Aspartate carbamoyltransferase regulatory chain"/>
    <property type="match status" value="1"/>
</dbReference>
<dbReference type="Gene3D" id="2.30.30.20">
    <property type="entry name" value="Aspartate carbamoyltransferase regulatory subunit, C-terminal domain"/>
    <property type="match status" value="1"/>
</dbReference>
<dbReference type="Gene3D" id="3.30.70.140">
    <property type="entry name" value="Aspartate carbamoyltransferase regulatory subunit, N-terminal domain"/>
    <property type="match status" value="1"/>
</dbReference>
<dbReference type="HAMAP" id="MF_00002">
    <property type="entry name" value="Asp_carb_tr_reg"/>
    <property type="match status" value="1"/>
</dbReference>
<dbReference type="InterPro" id="IPR020545">
    <property type="entry name" value="Asp_carbamoyltransf_reg_N"/>
</dbReference>
<dbReference type="InterPro" id="IPR002801">
    <property type="entry name" value="Asp_carbamoylTrfase_reg"/>
</dbReference>
<dbReference type="InterPro" id="IPR020542">
    <property type="entry name" value="Asp_carbamoyltrfase_reg_C"/>
</dbReference>
<dbReference type="InterPro" id="IPR036792">
    <property type="entry name" value="Asp_carbatrfase_reg_C_sf"/>
</dbReference>
<dbReference type="InterPro" id="IPR036793">
    <property type="entry name" value="Asp_carbatrfase_reg_N_sf"/>
</dbReference>
<dbReference type="NCBIfam" id="TIGR00240">
    <property type="entry name" value="ATCase_reg"/>
    <property type="match status" value="1"/>
</dbReference>
<dbReference type="PANTHER" id="PTHR35805">
    <property type="entry name" value="ASPARTATE CARBAMOYLTRANSFERASE REGULATORY CHAIN"/>
    <property type="match status" value="1"/>
</dbReference>
<dbReference type="PANTHER" id="PTHR35805:SF1">
    <property type="entry name" value="ASPARTATE CARBAMOYLTRANSFERASE REGULATORY CHAIN"/>
    <property type="match status" value="1"/>
</dbReference>
<dbReference type="Pfam" id="PF01948">
    <property type="entry name" value="PyrI"/>
    <property type="match status" value="1"/>
</dbReference>
<dbReference type="Pfam" id="PF02748">
    <property type="entry name" value="PyrI_C"/>
    <property type="match status" value="1"/>
</dbReference>
<dbReference type="SUPFAM" id="SSF57825">
    <property type="entry name" value="Aspartate carbamoyltransferase, Regulatory-chain, C-terminal domain"/>
    <property type="match status" value="1"/>
</dbReference>
<dbReference type="SUPFAM" id="SSF54893">
    <property type="entry name" value="Aspartate carbamoyltransferase, Regulatory-chain, N-terminal domain"/>
    <property type="match status" value="1"/>
</dbReference>
<feature type="chain" id="PRO_1000000052" description="Aspartate carbamoyltransferase regulatory chain">
    <location>
        <begin position="1"/>
        <end position="154"/>
    </location>
</feature>
<feature type="binding site" evidence="1">
    <location>
        <position position="109"/>
    </location>
    <ligand>
        <name>Zn(2+)</name>
        <dbReference type="ChEBI" id="CHEBI:29105"/>
    </ligand>
</feature>
<feature type="binding site" evidence="1">
    <location>
        <position position="114"/>
    </location>
    <ligand>
        <name>Zn(2+)</name>
        <dbReference type="ChEBI" id="CHEBI:29105"/>
    </ligand>
</feature>
<feature type="binding site" evidence="1">
    <location>
        <position position="138"/>
    </location>
    <ligand>
        <name>Zn(2+)</name>
        <dbReference type="ChEBI" id="CHEBI:29105"/>
    </ligand>
</feature>
<feature type="binding site" evidence="1">
    <location>
        <position position="141"/>
    </location>
    <ligand>
        <name>Zn(2+)</name>
        <dbReference type="ChEBI" id="CHEBI:29105"/>
    </ligand>
</feature>
<keyword id="KW-0479">Metal-binding</keyword>
<keyword id="KW-0665">Pyrimidine biosynthesis</keyword>
<keyword id="KW-0862">Zinc</keyword>
<protein>
    <recommendedName>
        <fullName evidence="1">Aspartate carbamoyltransferase regulatory chain</fullName>
    </recommendedName>
</protein>
<name>PYRI_SODGM</name>
<accession>Q2NR34</accession>